<dbReference type="EC" id="2.3.1.-"/>
<dbReference type="EMBL" id="AL009126">
    <property type="protein sequence ID" value="CAB15078.1"/>
    <property type="molecule type" value="Genomic_DNA"/>
</dbReference>
<dbReference type="PIR" id="B70006">
    <property type="entry name" value="B70006"/>
</dbReference>
<dbReference type="RefSeq" id="NP_390978.1">
    <property type="nucleotide sequence ID" value="NC_000964.3"/>
</dbReference>
<dbReference type="RefSeq" id="WP_003228963.1">
    <property type="nucleotide sequence ID" value="NZ_OZ025638.1"/>
</dbReference>
<dbReference type="SMR" id="O32075"/>
<dbReference type="FunCoup" id="O32075">
    <property type="interactions" value="8"/>
</dbReference>
<dbReference type="STRING" id="224308.BSU31000"/>
<dbReference type="PaxDb" id="224308-BSU31000"/>
<dbReference type="EnsemblBacteria" id="CAB15078">
    <property type="protein sequence ID" value="CAB15078"/>
    <property type="gene ID" value="BSU_31000"/>
</dbReference>
<dbReference type="GeneID" id="938830"/>
<dbReference type="KEGG" id="bsu:BSU31000"/>
<dbReference type="PATRIC" id="fig|224308.179.peg.3360"/>
<dbReference type="eggNOG" id="COG1247">
    <property type="taxonomic scope" value="Bacteria"/>
</dbReference>
<dbReference type="InParanoid" id="O32075"/>
<dbReference type="OrthoDB" id="5292888at2"/>
<dbReference type="PhylomeDB" id="O32075"/>
<dbReference type="BioCyc" id="BSUB:BSU31000-MONOMER"/>
<dbReference type="Proteomes" id="UP000001570">
    <property type="component" value="Chromosome"/>
</dbReference>
<dbReference type="GO" id="GO:0016747">
    <property type="term" value="F:acyltransferase activity, transferring groups other than amino-acyl groups"/>
    <property type="evidence" value="ECO:0000318"/>
    <property type="project" value="GO_Central"/>
</dbReference>
<dbReference type="CDD" id="cd04301">
    <property type="entry name" value="NAT_SF"/>
    <property type="match status" value="1"/>
</dbReference>
<dbReference type="Gene3D" id="3.40.630.30">
    <property type="match status" value="1"/>
</dbReference>
<dbReference type="InterPro" id="IPR016181">
    <property type="entry name" value="Acyl_CoA_acyltransferase"/>
</dbReference>
<dbReference type="InterPro" id="IPR000182">
    <property type="entry name" value="GNAT_dom"/>
</dbReference>
<dbReference type="Pfam" id="PF00583">
    <property type="entry name" value="Acetyltransf_1"/>
    <property type="match status" value="1"/>
</dbReference>
<dbReference type="SUPFAM" id="SSF55729">
    <property type="entry name" value="Acyl-CoA N-acyltransferases (Nat)"/>
    <property type="match status" value="1"/>
</dbReference>
<dbReference type="PROSITE" id="PS51186">
    <property type="entry name" value="GNAT"/>
    <property type="match status" value="1"/>
</dbReference>
<comment type="similarity">
    <text evidence="2">Belongs to the acetyltransferase family.</text>
</comment>
<keyword id="KW-0012">Acyltransferase</keyword>
<keyword id="KW-1185">Reference proteome</keyword>
<keyword id="KW-0808">Transferase</keyword>
<gene>
    <name type="primary">yuaI</name>
    <name type="ordered locus">BSU31000</name>
</gene>
<reference key="1">
    <citation type="journal article" date="1997" name="Nature">
        <title>The complete genome sequence of the Gram-positive bacterium Bacillus subtilis.</title>
        <authorList>
            <person name="Kunst F."/>
            <person name="Ogasawara N."/>
            <person name="Moszer I."/>
            <person name="Albertini A.M."/>
            <person name="Alloni G."/>
            <person name="Azevedo V."/>
            <person name="Bertero M.G."/>
            <person name="Bessieres P."/>
            <person name="Bolotin A."/>
            <person name="Borchert S."/>
            <person name="Borriss R."/>
            <person name="Boursier L."/>
            <person name="Brans A."/>
            <person name="Braun M."/>
            <person name="Brignell S.C."/>
            <person name="Bron S."/>
            <person name="Brouillet S."/>
            <person name="Bruschi C.V."/>
            <person name="Caldwell B."/>
            <person name="Capuano V."/>
            <person name="Carter N.M."/>
            <person name="Choi S.-K."/>
            <person name="Codani J.-J."/>
            <person name="Connerton I.F."/>
            <person name="Cummings N.J."/>
            <person name="Daniel R.A."/>
            <person name="Denizot F."/>
            <person name="Devine K.M."/>
            <person name="Duesterhoeft A."/>
            <person name="Ehrlich S.D."/>
            <person name="Emmerson P.T."/>
            <person name="Entian K.-D."/>
            <person name="Errington J."/>
            <person name="Fabret C."/>
            <person name="Ferrari E."/>
            <person name="Foulger D."/>
            <person name="Fritz C."/>
            <person name="Fujita M."/>
            <person name="Fujita Y."/>
            <person name="Fuma S."/>
            <person name="Galizzi A."/>
            <person name="Galleron N."/>
            <person name="Ghim S.-Y."/>
            <person name="Glaser P."/>
            <person name="Goffeau A."/>
            <person name="Golightly E.J."/>
            <person name="Grandi G."/>
            <person name="Guiseppi G."/>
            <person name="Guy B.J."/>
            <person name="Haga K."/>
            <person name="Haiech J."/>
            <person name="Harwood C.R."/>
            <person name="Henaut A."/>
            <person name="Hilbert H."/>
            <person name="Holsappel S."/>
            <person name="Hosono S."/>
            <person name="Hullo M.-F."/>
            <person name="Itaya M."/>
            <person name="Jones L.-M."/>
            <person name="Joris B."/>
            <person name="Karamata D."/>
            <person name="Kasahara Y."/>
            <person name="Klaerr-Blanchard M."/>
            <person name="Klein C."/>
            <person name="Kobayashi Y."/>
            <person name="Koetter P."/>
            <person name="Koningstein G."/>
            <person name="Krogh S."/>
            <person name="Kumano M."/>
            <person name="Kurita K."/>
            <person name="Lapidus A."/>
            <person name="Lardinois S."/>
            <person name="Lauber J."/>
            <person name="Lazarevic V."/>
            <person name="Lee S.-M."/>
            <person name="Levine A."/>
            <person name="Liu H."/>
            <person name="Masuda S."/>
            <person name="Mauel C."/>
            <person name="Medigue C."/>
            <person name="Medina N."/>
            <person name="Mellado R.P."/>
            <person name="Mizuno M."/>
            <person name="Moestl D."/>
            <person name="Nakai S."/>
            <person name="Noback M."/>
            <person name="Noone D."/>
            <person name="O'Reilly M."/>
            <person name="Ogawa K."/>
            <person name="Ogiwara A."/>
            <person name="Oudega B."/>
            <person name="Park S.-H."/>
            <person name="Parro V."/>
            <person name="Pohl T.M."/>
            <person name="Portetelle D."/>
            <person name="Porwollik S."/>
            <person name="Prescott A.M."/>
            <person name="Presecan E."/>
            <person name="Pujic P."/>
            <person name="Purnelle B."/>
            <person name="Rapoport G."/>
            <person name="Rey M."/>
            <person name="Reynolds S."/>
            <person name="Rieger M."/>
            <person name="Rivolta C."/>
            <person name="Rocha E."/>
            <person name="Roche B."/>
            <person name="Rose M."/>
            <person name="Sadaie Y."/>
            <person name="Sato T."/>
            <person name="Scanlan E."/>
            <person name="Schleich S."/>
            <person name="Schroeter R."/>
            <person name="Scoffone F."/>
            <person name="Sekiguchi J."/>
            <person name="Sekowska A."/>
            <person name="Seror S.J."/>
            <person name="Serror P."/>
            <person name="Shin B.-S."/>
            <person name="Soldo B."/>
            <person name="Sorokin A."/>
            <person name="Tacconi E."/>
            <person name="Takagi T."/>
            <person name="Takahashi H."/>
            <person name="Takemaru K."/>
            <person name="Takeuchi M."/>
            <person name="Tamakoshi A."/>
            <person name="Tanaka T."/>
            <person name="Terpstra P."/>
            <person name="Tognoni A."/>
            <person name="Tosato V."/>
            <person name="Uchiyama S."/>
            <person name="Vandenbol M."/>
            <person name="Vannier F."/>
            <person name="Vassarotti A."/>
            <person name="Viari A."/>
            <person name="Wambutt R."/>
            <person name="Wedler E."/>
            <person name="Wedler H."/>
            <person name="Weitzenegger T."/>
            <person name="Winters P."/>
            <person name="Wipat A."/>
            <person name="Yamamoto H."/>
            <person name="Yamane K."/>
            <person name="Yasumoto K."/>
            <person name="Yata K."/>
            <person name="Yoshida K."/>
            <person name="Yoshikawa H.-F."/>
            <person name="Zumstein E."/>
            <person name="Yoshikawa H."/>
            <person name="Danchin A."/>
        </authorList>
    </citation>
    <scope>NUCLEOTIDE SEQUENCE [LARGE SCALE GENOMIC DNA]</scope>
    <source>
        <strain>168</strain>
    </source>
</reference>
<sequence>MVTVREAKLEDIKDIAKVHVDSWRTTYHEIIPIDYLNSLNYKEFEDKWKSRSLKGVFVAQDEKGSVFGFASFGPIRSEQEGYDGELYAIYLLEERQRQGAGRALLAKGAEFLLQHGFSSMFVWVIEQNPSIIFYQAYSPERVAEDNFEIAGVRLKEVGLGWPDLSALKTLLNR</sequence>
<name>YUAI_BACSU</name>
<accession>O32075</accession>
<proteinExistence type="inferred from homology"/>
<protein>
    <recommendedName>
        <fullName>Uncharacterized N-acetyltransferase YuaI</fullName>
        <ecNumber>2.3.1.-</ecNumber>
    </recommendedName>
</protein>
<organism>
    <name type="scientific">Bacillus subtilis (strain 168)</name>
    <dbReference type="NCBI Taxonomy" id="224308"/>
    <lineage>
        <taxon>Bacteria</taxon>
        <taxon>Bacillati</taxon>
        <taxon>Bacillota</taxon>
        <taxon>Bacilli</taxon>
        <taxon>Bacillales</taxon>
        <taxon>Bacillaceae</taxon>
        <taxon>Bacillus</taxon>
    </lineage>
</organism>
<evidence type="ECO:0000255" key="1">
    <source>
        <dbReference type="PROSITE-ProRule" id="PRU00532"/>
    </source>
</evidence>
<evidence type="ECO:0000305" key="2"/>
<feature type="chain" id="PRO_0000360501" description="Uncharacterized N-acetyltransferase YuaI">
    <location>
        <begin position="1"/>
        <end position="173"/>
    </location>
</feature>
<feature type="domain" description="N-acetyltransferase" evidence="1">
    <location>
        <begin position="2"/>
        <end position="171"/>
    </location>
</feature>